<proteinExistence type="inferred from homology"/>
<name>CHS1_RHIAT</name>
<feature type="chain" id="PRO_0000193709" description="Chitin synthase 1">
    <location>
        <begin position="1" status="less than"/>
        <end position="189" status="greater than"/>
    </location>
</feature>
<feature type="non-terminal residue">
    <location>
        <position position="1"/>
    </location>
</feature>
<feature type="non-terminal residue">
    <location>
        <position position="189"/>
    </location>
</feature>
<sequence length="189" mass="21314">EFLFARTMIGVFKNIEYMCNRTSSKTWGKEAWKKIVVCIVSDRRAKINPRTRAVLAGLGVYQDGIAKQQVNGKDVTAHIYEYTTQVGLELKGTQVSLKPRSATPVQLLFCLKEKNQKKINSHRWFFQAFGRVLDPNICVLIDAGTKPGKDSIYQLWKAFDLEPMCGGACGEIKVMLDHGKKLYNPLIAT</sequence>
<accession>P30592</accession>
<evidence type="ECO:0000305" key="1"/>
<protein>
    <recommendedName>
        <fullName>Chitin synthase 1</fullName>
        <ecNumber>2.4.1.16</ecNumber>
    </recommendedName>
    <alternativeName>
        <fullName>Chitin-UDP acetyl-glucosaminyl transferase 1</fullName>
    </alternativeName>
    <alternativeName>
        <fullName>Class-I chitin synthase 1</fullName>
    </alternativeName>
</protein>
<keyword id="KW-1003">Cell membrane</keyword>
<keyword id="KW-0961">Cell wall biogenesis/degradation</keyword>
<keyword id="KW-0328">Glycosyltransferase</keyword>
<keyword id="KW-0472">Membrane</keyword>
<keyword id="KW-0808">Transferase</keyword>
<keyword id="KW-0812">Transmembrane</keyword>
<gene>
    <name type="primary">CHS1</name>
</gene>
<organism>
    <name type="scientific">Rhinocladiella atrovirens</name>
    <dbReference type="NCBI Taxonomy" id="5588"/>
    <lineage>
        <taxon>Eukaryota</taxon>
        <taxon>Fungi</taxon>
        <taxon>Dikarya</taxon>
        <taxon>Ascomycota</taxon>
        <taxon>Pezizomycotina</taxon>
        <taxon>Eurotiomycetes</taxon>
        <taxon>Chaetothyriomycetidae</taxon>
        <taxon>Chaetothyriales</taxon>
        <taxon>Herpotrichiellaceae</taxon>
        <taxon>Rhinocladiella</taxon>
    </lineage>
</organism>
<reference key="1">
    <citation type="journal article" date="1992" name="Proc. Natl. Acad. Sci. U.S.A.">
        <title>Classification of fungal chitin synthases.</title>
        <authorList>
            <person name="Bowen A.R."/>
            <person name="Chen-Wu J.L.-P."/>
            <person name="Momany M."/>
            <person name="Young R."/>
            <person name="Szaniszlo P.J."/>
            <person name="Robbins P.W."/>
        </authorList>
    </citation>
    <scope>NUCLEOTIDE SEQUENCE [GENOMIC DNA]</scope>
</reference>
<comment type="function">
    <text evidence="1">Polymerizes chitin, a structural polymer of the cell wall and septum, by transferring the sugar moiety of UDP-GlcNAc to the non-reducing end of the growing chitin polymer.</text>
</comment>
<comment type="catalytic activity">
    <reaction>
        <text>[(1-&gt;4)-N-acetyl-beta-D-glucosaminyl](n) + UDP-N-acetyl-alpha-D-glucosamine = [(1-&gt;4)-N-acetyl-beta-D-glucosaminyl](n+1) + UDP + H(+)</text>
        <dbReference type="Rhea" id="RHEA:16637"/>
        <dbReference type="Rhea" id="RHEA-COMP:9593"/>
        <dbReference type="Rhea" id="RHEA-COMP:9595"/>
        <dbReference type="ChEBI" id="CHEBI:15378"/>
        <dbReference type="ChEBI" id="CHEBI:17029"/>
        <dbReference type="ChEBI" id="CHEBI:57705"/>
        <dbReference type="ChEBI" id="CHEBI:58223"/>
        <dbReference type="EC" id="2.4.1.16"/>
    </reaction>
</comment>
<comment type="subcellular location">
    <subcellularLocation>
        <location evidence="1">Cell membrane</location>
        <topology evidence="1">Multi-pass membrane protein</topology>
    </subcellularLocation>
</comment>
<comment type="similarity">
    <text evidence="1">Belongs to the chitin synthase family. Class I subfamily.</text>
</comment>
<dbReference type="EC" id="2.4.1.16"/>
<dbReference type="EMBL" id="M82954">
    <property type="protein sequence ID" value="AAA33919.1"/>
    <property type="molecule type" value="Genomic_DNA"/>
</dbReference>
<dbReference type="PIR" id="I38192">
    <property type="entry name" value="I38192"/>
</dbReference>
<dbReference type="SMR" id="P30592"/>
<dbReference type="CAZy" id="GT2">
    <property type="family name" value="Glycosyltransferase Family 2"/>
</dbReference>
<dbReference type="GO" id="GO:0030428">
    <property type="term" value="C:cell septum"/>
    <property type="evidence" value="ECO:0007669"/>
    <property type="project" value="TreeGrafter"/>
</dbReference>
<dbReference type="GO" id="GO:0005886">
    <property type="term" value="C:plasma membrane"/>
    <property type="evidence" value="ECO:0007669"/>
    <property type="project" value="UniProtKB-SubCell"/>
</dbReference>
<dbReference type="GO" id="GO:0004100">
    <property type="term" value="F:chitin synthase activity"/>
    <property type="evidence" value="ECO:0007669"/>
    <property type="project" value="UniProtKB-EC"/>
</dbReference>
<dbReference type="GO" id="GO:0071555">
    <property type="term" value="P:cell wall organization"/>
    <property type="evidence" value="ECO:0007669"/>
    <property type="project" value="UniProtKB-KW"/>
</dbReference>
<dbReference type="GO" id="GO:0006031">
    <property type="term" value="P:chitin biosynthetic process"/>
    <property type="evidence" value="ECO:0007669"/>
    <property type="project" value="InterPro"/>
</dbReference>
<dbReference type="InterPro" id="IPR004835">
    <property type="entry name" value="Chitin_synth"/>
</dbReference>
<dbReference type="InterPro" id="IPR004834">
    <property type="entry name" value="Chitin_synth_fun"/>
</dbReference>
<dbReference type="PANTHER" id="PTHR22914">
    <property type="entry name" value="CHITIN SYNTHASE"/>
    <property type="match status" value="1"/>
</dbReference>
<dbReference type="PANTHER" id="PTHR22914:SF9">
    <property type="entry name" value="CHITIN SYNTHASE 1"/>
    <property type="match status" value="1"/>
</dbReference>
<dbReference type="Pfam" id="PF01644">
    <property type="entry name" value="Chitin_synth_1"/>
    <property type="match status" value="1"/>
</dbReference>